<reference key="1">
    <citation type="journal article" date="2002" name="Lancet">
        <title>Genome and virulence determinants of high virulence community-acquired MRSA.</title>
        <authorList>
            <person name="Baba T."/>
            <person name="Takeuchi F."/>
            <person name="Kuroda M."/>
            <person name="Yuzawa H."/>
            <person name="Aoki K."/>
            <person name="Oguchi A."/>
            <person name="Nagai Y."/>
            <person name="Iwama N."/>
            <person name="Asano K."/>
            <person name="Naimi T."/>
            <person name="Kuroda H."/>
            <person name="Cui L."/>
            <person name="Yamamoto K."/>
            <person name="Hiramatsu K."/>
        </authorList>
    </citation>
    <scope>NUCLEOTIDE SEQUENCE [LARGE SCALE GENOMIC DNA]</scope>
    <source>
        <strain>MW2</strain>
    </source>
</reference>
<gene>
    <name evidence="1" type="primary">murB</name>
    <name type="ordered locus">MW0700</name>
</gene>
<evidence type="ECO:0000255" key="1">
    <source>
        <dbReference type="HAMAP-Rule" id="MF_00037"/>
    </source>
</evidence>
<sequence>MINKDIYQALQQLIPNEKIKVDEPLKRYTYTKTGGNADFYITPTKNEEVQAVVKYAYQNEIPVTYLGNGSNIIIREGGIRGIVISLLSLDHIEVSDDAIIAGSGAAIIDVSRVARDYALTGLEFACGIPGSIGGAVYMNAGAYGGEVKDCIDYALCVNEQGSLIKLTTKELELDYRNSIIQKEHLVVLEAAFTLAPGKMTEIQAKMDDLTERRESKQPLEYPSCGSVFQRPPGHFAGKLIQDSNLQGHRIGGVEVSTKHAGFMVNVDNGTATDYENLIHYVQKTVKEKFGIELNREVRIIGEHPKES</sequence>
<protein>
    <recommendedName>
        <fullName evidence="1">UDP-N-acetylenolpyruvoylglucosamine reductase</fullName>
        <ecNumber evidence="1">1.3.1.98</ecNumber>
    </recommendedName>
    <alternativeName>
        <fullName evidence="1">UDP-N-acetylmuramate dehydrogenase</fullName>
    </alternativeName>
</protein>
<accession>P61432</accession>
<accession>Q93G02</accession>
<organism>
    <name type="scientific">Staphylococcus aureus (strain MW2)</name>
    <dbReference type="NCBI Taxonomy" id="196620"/>
    <lineage>
        <taxon>Bacteria</taxon>
        <taxon>Bacillati</taxon>
        <taxon>Bacillota</taxon>
        <taxon>Bacilli</taxon>
        <taxon>Bacillales</taxon>
        <taxon>Staphylococcaceae</taxon>
        <taxon>Staphylococcus</taxon>
    </lineage>
</organism>
<keyword id="KW-0131">Cell cycle</keyword>
<keyword id="KW-0132">Cell division</keyword>
<keyword id="KW-0133">Cell shape</keyword>
<keyword id="KW-0961">Cell wall biogenesis/degradation</keyword>
<keyword id="KW-0963">Cytoplasm</keyword>
<keyword id="KW-0274">FAD</keyword>
<keyword id="KW-0285">Flavoprotein</keyword>
<keyword id="KW-0521">NADP</keyword>
<keyword id="KW-0560">Oxidoreductase</keyword>
<keyword id="KW-0573">Peptidoglycan synthesis</keyword>
<proteinExistence type="inferred from homology"/>
<comment type="function">
    <text evidence="1">Cell wall formation.</text>
</comment>
<comment type="catalytic activity">
    <reaction evidence="1">
        <text>UDP-N-acetyl-alpha-D-muramate + NADP(+) = UDP-N-acetyl-3-O-(1-carboxyvinyl)-alpha-D-glucosamine + NADPH + H(+)</text>
        <dbReference type="Rhea" id="RHEA:12248"/>
        <dbReference type="ChEBI" id="CHEBI:15378"/>
        <dbReference type="ChEBI" id="CHEBI:57783"/>
        <dbReference type="ChEBI" id="CHEBI:58349"/>
        <dbReference type="ChEBI" id="CHEBI:68483"/>
        <dbReference type="ChEBI" id="CHEBI:70757"/>
        <dbReference type="EC" id="1.3.1.98"/>
    </reaction>
</comment>
<comment type="cofactor">
    <cofactor evidence="1">
        <name>FAD</name>
        <dbReference type="ChEBI" id="CHEBI:57692"/>
    </cofactor>
</comment>
<comment type="pathway">
    <text evidence="1">Cell wall biogenesis; peptidoglycan biosynthesis.</text>
</comment>
<comment type="subcellular location">
    <subcellularLocation>
        <location evidence="1">Cytoplasm</location>
    </subcellularLocation>
</comment>
<comment type="similarity">
    <text evidence="1">Belongs to the MurB family.</text>
</comment>
<dbReference type="EC" id="1.3.1.98" evidence="1"/>
<dbReference type="EMBL" id="BA000033">
    <property type="protein sequence ID" value="BAB94565.1"/>
    <property type="molecule type" value="Genomic_DNA"/>
</dbReference>
<dbReference type="RefSeq" id="WP_000608440.1">
    <property type="nucleotide sequence ID" value="NC_003923.1"/>
</dbReference>
<dbReference type="SMR" id="P61432"/>
<dbReference type="DrugBank" id="DB03147">
    <property type="generic name" value="Flavin adenine dinucleotide"/>
</dbReference>
<dbReference type="KEGG" id="sam:MW0700"/>
<dbReference type="HOGENOM" id="CLU_035304_1_1_9"/>
<dbReference type="UniPathway" id="UPA00219"/>
<dbReference type="GO" id="GO:0005829">
    <property type="term" value="C:cytosol"/>
    <property type="evidence" value="ECO:0007669"/>
    <property type="project" value="TreeGrafter"/>
</dbReference>
<dbReference type="GO" id="GO:0071949">
    <property type="term" value="F:FAD binding"/>
    <property type="evidence" value="ECO:0007669"/>
    <property type="project" value="InterPro"/>
</dbReference>
<dbReference type="GO" id="GO:0008762">
    <property type="term" value="F:UDP-N-acetylmuramate dehydrogenase activity"/>
    <property type="evidence" value="ECO:0007669"/>
    <property type="project" value="UniProtKB-UniRule"/>
</dbReference>
<dbReference type="GO" id="GO:0051301">
    <property type="term" value="P:cell division"/>
    <property type="evidence" value="ECO:0007669"/>
    <property type="project" value="UniProtKB-KW"/>
</dbReference>
<dbReference type="GO" id="GO:0071555">
    <property type="term" value="P:cell wall organization"/>
    <property type="evidence" value="ECO:0007669"/>
    <property type="project" value="UniProtKB-KW"/>
</dbReference>
<dbReference type="GO" id="GO:0009252">
    <property type="term" value="P:peptidoglycan biosynthetic process"/>
    <property type="evidence" value="ECO:0007669"/>
    <property type="project" value="UniProtKB-UniRule"/>
</dbReference>
<dbReference type="GO" id="GO:0008360">
    <property type="term" value="P:regulation of cell shape"/>
    <property type="evidence" value="ECO:0007669"/>
    <property type="project" value="UniProtKB-KW"/>
</dbReference>
<dbReference type="FunFam" id="3.90.78.10:FF:000001">
    <property type="entry name" value="UDP-N-acetylenolpyruvoylglucosamine reductase"/>
    <property type="match status" value="1"/>
</dbReference>
<dbReference type="Gene3D" id="3.30.465.10">
    <property type="match status" value="1"/>
</dbReference>
<dbReference type="Gene3D" id="3.90.78.10">
    <property type="entry name" value="UDP-N-acetylenolpyruvoylglucosamine reductase, C-terminal domain"/>
    <property type="match status" value="1"/>
</dbReference>
<dbReference type="Gene3D" id="3.30.43.10">
    <property type="entry name" value="Uridine Diphospho-n-acetylenolpyruvylglucosamine Reductase, domain 2"/>
    <property type="match status" value="1"/>
</dbReference>
<dbReference type="HAMAP" id="MF_00037">
    <property type="entry name" value="MurB"/>
    <property type="match status" value="1"/>
</dbReference>
<dbReference type="InterPro" id="IPR016166">
    <property type="entry name" value="FAD-bd_PCMH"/>
</dbReference>
<dbReference type="InterPro" id="IPR036318">
    <property type="entry name" value="FAD-bd_PCMH-like_sf"/>
</dbReference>
<dbReference type="InterPro" id="IPR016167">
    <property type="entry name" value="FAD-bd_PCMH_sub1"/>
</dbReference>
<dbReference type="InterPro" id="IPR016169">
    <property type="entry name" value="FAD-bd_PCMH_sub2"/>
</dbReference>
<dbReference type="InterPro" id="IPR003170">
    <property type="entry name" value="MurB"/>
</dbReference>
<dbReference type="InterPro" id="IPR011601">
    <property type="entry name" value="MurB_C"/>
</dbReference>
<dbReference type="InterPro" id="IPR036635">
    <property type="entry name" value="MurB_C_sf"/>
</dbReference>
<dbReference type="InterPro" id="IPR006094">
    <property type="entry name" value="Oxid_FAD_bind_N"/>
</dbReference>
<dbReference type="NCBIfam" id="TIGR00179">
    <property type="entry name" value="murB"/>
    <property type="match status" value="1"/>
</dbReference>
<dbReference type="NCBIfam" id="NF010480">
    <property type="entry name" value="PRK13905.1"/>
    <property type="match status" value="1"/>
</dbReference>
<dbReference type="PANTHER" id="PTHR21071">
    <property type="entry name" value="UDP-N-ACETYLENOLPYRUVOYLGLUCOSAMINE REDUCTASE"/>
    <property type="match status" value="1"/>
</dbReference>
<dbReference type="PANTHER" id="PTHR21071:SF4">
    <property type="entry name" value="UDP-N-ACETYLENOLPYRUVOYLGLUCOSAMINE REDUCTASE"/>
    <property type="match status" value="1"/>
</dbReference>
<dbReference type="Pfam" id="PF01565">
    <property type="entry name" value="FAD_binding_4"/>
    <property type="match status" value="1"/>
</dbReference>
<dbReference type="Pfam" id="PF02873">
    <property type="entry name" value="MurB_C"/>
    <property type="match status" value="1"/>
</dbReference>
<dbReference type="SUPFAM" id="SSF56176">
    <property type="entry name" value="FAD-binding/transporter-associated domain-like"/>
    <property type="match status" value="1"/>
</dbReference>
<dbReference type="SUPFAM" id="SSF56194">
    <property type="entry name" value="Uridine diphospho-N-Acetylenolpyruvylglucosamine reductase, MurB, C-terminal domain"/>
    <property type="match status" value="1"/>
</dbReference>
<dbReference type="PROSITE" id="PS51387">
    <property type="entry name" value="FAD_PCMH"/>
    <property type="match status" value="1"/>
</dbReference>
<name>MURB_STAAW</name>
<feature type="chain" id="PRO_0000179262" description="UDP-N-acetylenolpyruvoylglucosamine reductase">
    <location>
        <begin position="1"/>
        <end position="307"/>
    </location>
</feature>
<feature type="domain" description="FAD-binding PCMH-type" evidence="1">
    <location>
        <begin position="33"/>
        <end position="197"/>
    </location>
</feature>
<feature type="active site" evidence="1">
    <location>
        <position position="176"/>
    </location>
</feature>
<feature type="active site" description="Proton donor" evidence="1">
    <location>
        <position position="226"/>
    </location>
</feature>
<feature type="active site" evidence="1">
    <location>
        <position position="296"/>
    </location>
</feature>